<feature type="chain" id="PRO_1000018786" description="Phosphoribosylaminoimidazole-succinocarboxamide synthase">
    <location>
        <begin position="1"/>
        <end position="234"/>
    </location>
</feature>
<proteinExistence type="inferred from homology"/>
<comment type="catalytic activity">
    <reaction evidence="1">
        <text>5-amino-1-(5-phospho-D-ribosyl)imidazole-4-carboxylate + L-aspartate + ATP = (2S)-2-[5-amino-1-(5-phospho-beta-D-ribosyl)imidazole-4-carboxamido]succinate + ADP + phosphate + 2 H(+)</text>
        <dbReference type="Rhea" id="RHEA:22628"/>
        <dbReference type="ChEBI" id="CHEBI:15378"/>
        <dbReference type="ChEBI" id="CHEBI:29991"/>
        <dbReference type="ChEBI" id="CHEBI:30616"/>
        <dbReference type="ChEBI" id="CHEBI:43474"/>
        <dbReference type="ChEBI" id="CHEBI:58443"/>
        <dbReference type="ChEBI" id="CHEBI:77657"/>
        <dbReference type="ChEBI" id="CHEBI:456216"/>
        <dbReference type="EC" id="6.3.2.6"/>
    </reaction>
</comment>
<comment type="pathway">
    <text evidence="1">Purine metabolism; IMP biosynthesis via de novo pathway; 5-amino-1-(5-phospho-D-ribosyl)imidazole-4-carboxamide from 5-amino-1-(5-phospho-D-ribosyl)imidazole-4-carboxylate: step 1/2.</text>
</comment>
<comment type="similarity">
    <text evidence="1">Belongs to the SAICAR synthetase family.</text>
</comment>
<dbReference type="EC" id="6.3.2.6" evidence="1"/>
<dbReference type="EMBL" id="AP009324">
    <property type="protein sequence ID" value="BAF77941.1"/>
    <property type="molecule type" value="Genomic_DNA"/>
</dbReference>
<dbReference type="RefSeq" id="WP_000174053.1">
    <property type="nucleotide sequence ID" value="NZ_CTYB01000001.1"/>
</dbReference>
<dbReference type="SMR" id="A7X0V7"/>
<dbReference type="KEGG" id="saw:SAHV_1058"/>
<dbReference type="HOGENOM" id="CLU_061495_2_0_9"/>
<dbReference type="UniPathway" id="UPA00074">
    <property type="reaction ID" value="UER00131"/>
</dbReference>
<dbReference type="GO" id="GO:0005524">
    <property type="term" value="F:ATP binding"/>
    <property type="evidence" value="ECO:0007669"/>
    <property type="project" value="UniProtKB-KW"/>
</dbReference>
<dbReference type="GO" id="GO:0004639">
    <property type="term" value="F:phosphoribosylaminoimidazolesuccinocarboxamide synthase activity"/>
    <property type="evidence" value="ECO:0007669"/>
    <property type="project" value="UniProtKB-UniRule"/>
</dbReference>
<dbReference type="GO" id="GO:0006189">
    <property type="term" value="P:'de novo' IMP biosynthetic process"/>
    <property type="evidence" value="ECO:0007669"/>
    <property type="project" value="UniProtKB-UniRule"/>
</dbReference>
<dbReference type="GO" id="GO:0009236">
    <property type="term" value="P:cobalamin biosynthetic process"/>
    <property type="evidence" value="ECO:0007669"/>
    <property type="project" value="InterPro"/>
</dbReference>
<dbReference type="CDD" id="cd01415">
    <property type="entry name" value="SAICAR_synt_PurC"/>
    <property type="match status" value="1"/>
</dbReference>
<dbReference type="FunFam" id="3.30.200.20:FF:000189">
    <property type="entry name" value="Phosphoribosylaminoimidazole-succinocarboxamide synthase"/>
    <property type="match status" value="1"/>
</dbReference>
<dbReference type="FunFam" id="3.30.470.20:FF:000006">
    <property type="entry name" value="Phosphoribosylaminoimidazole-succinocarboxamide synthase"/>
    <property type="match status" value="1"/>
</dbReference>
<dbReference type="Gene3D" id="3.30.470.20">
    <property type="entry name" value="ATP-grasp fold, B domain"/>
    <property type="match status" value="1"/>
</dbReference>
<dbReference type="Gene3D" id="3.30.200.20">
    <property type="entry name" value="Phosphorylase Kinase, domain 1"/>
    <property type="match status" value="1"/>
</dbReference>
<dbReference type="HAMAP" id="MF_00137">
    <property type="entry name" value="SAICAR_synth"/>
    <property type="match status" value="1"/>
</dbReference>
<dbReference type="InterPro" id="IPR028923">
    <property type="entry name" value="SAICAR_synt/ADE2_N"/>
</dbReference>
<dbReference type="InterPro" id="IPR033934">
    <property type="entry name" value="SAICAR_synt_PurC"/>
</dbReference>
<dbReference type="InterPro" id="IPR001636">
    <property type="entry name" value="SAICAR_synth"/>
</dbReference>
<dbReference type="InterPro" id="IPR050089">
    <property type="entry name" value="SAICAR_synthetase"/>
</dbReference>
<dbReference type="InterPro" id="IPR018236">
    <property type="entry name" value="SAICAR_synthetase_CS"/>
</dbReference>
<dbReference type="NCBIfam" id="TIGR00081">
    <property type="entry name" value="purC"/>
    <property type="match status" value="1"/>
</dbReference>
<dbReference type="PANTHER" id="PTHR43599">
    <property type="entry name" value="MULTIFUNCTIONAL PROTEIN ADE2"/>
    <property type="match status" value="1"/>
</dbReference>
<dbReference type="PANTHER" id="PTHR43599:SF3">
    <property type="entry name" value="SI:DKEY-6E2.2"/>
    <property type="match status" value="1"/>
</dbReference>
<dbReference type="Pfam" id="PF01259">
    <property type="entry name" value="SAICAR_synt"/>
    <property type="match status" value="1"/>
</dbReference>
<dbReference type="SUPFAM" id="SSF56104">
    <property type="entry name" value="SAICAR synthase-like"/>
    <property type="match status" value="1"/>
</dbReference>
<dbReference type="PROSITE" id="PS01057">
    <property type="entry name" value="SAICAR_SYNTHETASE_1"/>
    <property type="match status" value="1"/>
</dbReference>
<dbReference type="PROSITE" id="PS01058">
    <property type="entry name" value="SAICAR_SYNTHETASE_2"/>
    <property type="match status" value="1"/>
</dbReference>
<name>PUR7_STAA1</name>
<accession>A7X0V7</accession>
<gene>
    <name evidence="1" type="primary">purC</name>
    <name type="ordered locus">SAHV_1058</name>
</gene>
<organism>
    <name type="scientific">Staphylococcus aureus (strain Mu3 / ATCC 700698)</name>
    <dbReference type="NCBI Taxonomy" id="418127"/>
    <lineage>
        <taxon>Bacteria</taxon>
        <taxon>Bacillati</taxon>
        <taxon>Bacillota</taxon>
        <taxon>Bacilli</taxon>
        <taxon>Bacillales</taxon>
        <taxon>Staphylococcaceae</taxon>
        <taxon>Staphylococcus</taxon>
    </lineage>
</organism>
<sequence>MTLLYEGKAKRIFSTNQENELRVEYKDEVTAGNGAKKDTMAGKGRLNNQITSIIFKYLQENGIESHFIKQLSETEQLVKPVKIIPLEVVVRNIASGSITKRLGFENGEVFREPLVEFFYKNDALNDPLITDDHVKLLNIASDEDIEILKSKALKINNVLKQLMDAMNLKLVDFKIEFGKTETGQILLADEISPDTCRIWDKATNANFDKDVYRNNTGSLIETYQIFLNKLEDLK</sequence>
<reference key="1">
    <citation type="journal article" date="2008" name="Antimicrob. Agents Chemother.">
        <title>Mutated response regulator graR is responsible for phenotypic conversion of Staphylococcus aureus from heterogeneous vancomycin-intermediate resistance to vancomycin-intermediate resistance.</title>
        <authorList>
            <person name="Neoh H.-M."/>
            <person name="Cui L."/>
            <person name="Yuzawa H."/>
            <person name="Takeuchi F."/>
            <person name="Matsuo M."/>
            <person name="Hiramatsu K."/>
        </authorList>
    </citation>
    <scope>NUCLEOTIDE SEQUENCE [LARGE SCALE GENOMIC DNA]</scope>
    <source>
        <strain>Mu3 / ATCC 700698</strain>
    </source>
</reference>
<evidence type="ECO:0000255" key="1">
    <source>
        <dbReference type="HAMAP-Rule" id="MF_00137"/>
    </source>
</evidence>
<keyword id="KW-0067">ATP-binding</keyword>
<keyword id="KW-0436">Ligase</keyword>
<keyword id="KW-0547">Nucleotide-binding</keyword>
<keyword id="KW-0658">Purine biosynthesis</keyword>
<protein>
    <recommendedName>
        <fullName evidence="1">Phosphoribosylaminoimidazole-succinocarboxamide synthase</fullName>
        <ecNumber evidence="1">6.3.2.6</ecNumber>
    </recommendedName>
    <alternativeName>
        <fullName evidence="1">SAICAR synthetase</fullName>
    </alternativeName>
</protein>